<protein>
    <recommendedName>
        <fullName evidence="1">UPF0235 protein YggU</fullName>
    </recommendedName>
</protein>
<organism>
    <name type="scientific">Shigella flexneri</name>
    <dbReference type="NCBI Taxonomy" id="623"/>
    <lineage>
        <taxon>Bacteria</taxon>
        <taxon>Pseudomonadati</taxon>
        <taxon>Pseudomonadota</taxon>
        <taxon>Gammaproteobacteria</taxon>
        <taxon>Enterobacterales</taxon>
        <taxon>Enterobacteriaceae</taxon>
        <taxon>Shigella</taxon>
    </lineage>
</organism>
<dbReference type="EMBL" id="AE005674">
    <property type="protein sequence ID" value="AAN44425.1"/>
    <property type="status" value="ALT_INIT"/>
    <property type="molecule type" value="Genomic_DNA"/>
</dbReference>
<dbReference type="EMBL" id="AE014073">
    <property type="protein sequence ID" value="AAP18250.1"/>
    <property type="status" value="ALT_INIT"/>
    <property type="molecule type" value="Genomic_DNA"/>
</dbReference>
<dbReference type="RefSeq" id="NP_708718.3">
    <property type="nucleotide sequence ID" value="NC_004337.2"/>
</dbReference>
<dbReference type="RefSeq" id="WP_001277222.1">
    <property type="nucleotide sequence ID" value="NZ_WPGW01000085.1"/>
</dbReference>
<dbReference type="SMR" id="Q83JS1"/>
<dbReference type="STRING" id="198214.SF2944"/>
<dbReference type="PaxDb" id="198214-SF2944"/>
<dbReference type="GeneID" id="1026326"/>
<dbReference type="GeneID" id="86861043"/>
<dbReference type="KEGG" id="sfl:SF2944"/>
<dbReference type="KEGG" id="sfx:S3148"/>
<dbReference type="PATRIC" id="fig|198214.7.peg.3501"/>
<dbReference type="HOGENOM" id="CLU_130694_5_0_6"/>
<dbReference type="Proteomes" id="UP000001006">
    <property type="component" value="Chromosome"/>
</dbReference>
<dbReference type="Proteomes" id="UP000002673">
    <property type="component" value="Chromosome"/>
</dbReference>
<dbReference type="GO" id="GO:0005737">
    <property type="term" value="C:cytoplasm"/>
    <property type="evidence" value="ECO:0007669"/>
    <property type="project" value="TreeGrafter"/>
</dbReference>
<dbReference type="Gene3D" id="3.30.1200.10">
    <property type="entry name" value="YggU-like"/>
    <property type="match status" value="1"/>
</dbReference>
<dbReference type="HAMAP" id="MF_00634">
    <property type="entry name" value="UPF0235"/>
    <property type="match status" value="1"/>
</dbReference>
<dbReference type="InterPro" id="IPR003746">
    <property type="entry name" value="DUF167"/>
</dbReference>
<dbReference type="InterPro" id="IPR036591">
    <property type="entry name" value="YggU-like_sf"/>
</dbReference>
<dbReference type="NCBIfam" id="TIGR00251">
    <property type="entry name" value="DUF167 family protein"/>
    <property type="match status" value="1"/>
</dbReference>
<dbReference type="NCBIfam" id="NF003466">
    <property type="entry name" value="PRK05090.1"/>
    <property type="match status" value="1"/>
</dbReference>
<dbReference type="PANTHER" id="PTHR13420">
    <property type="entry name" value="UPF0235 PROTEIN C15ORF40"/>
    <property type="match status" value="1"/>
</dbReference>
<dbReference type="PANTHER" id="PTHR13420:SF7">
    <property type="entry name" value="UPF0235 PROTEIN C15ORF40"/>
    <property type="match status" value="1"/>
</dbReference>
<dbReference type="Pfam" id="PF02594">
    <property type="entry name" value="DUF167"/>
    <property type="match status" value="1"/>
</dbReference>
<dbReference type="SMART" id="SM01152">
    <property type="entry name" value="DUF167"/>
    <property type="match status" value="1"/>
</dbReference>
<dbReference type="SUPFAM" id="SSF69786">
    <property type="entry name" value="YggU-like"/>
    <property type="match status" value="1"/>
</dbReference>
<name>YGGU_SHIFL</name>
<gene>
    <name evidence="1" type="primary">yggU</name>
    <name type="ordered locus">SF2944</name>
    <name type="ordered locus">S3148</name>
</gene>
<evidence type="ECO:0000255" key="1">
    <source>
        <dbReference type="HAMAP-Rule" id="MF_00634"/>
    </source>
</evidence>
<evidence type="ECO:0000305" key="2"/>
<keyword id="KW-1185">Reference proteome</keyword>
<sequence>MSAVTVNDDGLVLRLYIQPKASRDSIVGLHGDEVKVAITAPPVDGQANSHLVKFLGKQFRVAKSQVVIEKGELGRHKQIKIINPQQIPPEIAALIN</sequence>
<accession>Q83JS1</accession>
<proteinExistence type="inferred from homology"/>
<feature type="chain" id="PRO_0000139457" description="UPF0235 protein YggU">
    <location>
        <begin position="1"/>
        <end position="96"/>
    </location>
</feature>
<reference key="1">
    <citation type="journal article" date="2002" name="Nucleic Acids Res.">
        <title>Genome sequence of Shigella flexneri 2a: insights into pathogenicity through comparison with genomes of Escherichia coli K12 and O157.</title>
        <authorList>
            <person name="Jin Q."/>
            <person name="Yuan Z."/>
            <person name="Xu J."/>
            <person name="Wang Y."/>
            <person name="Shen Y."/>
            <person name="Lu W."/>
            <person name="Wang J."/>
            <person name="Liu H."/>
            <person name="Yang J."/>
            <person name="Yang F."/>
            <person name="Zhang X."/>
            <person name="Zhang J."/>
            <person name="Yang G."/>
            <person name="Wu H."/>
            <person name="Qu D."/>
            <person name="Dong J."/>
            <person name="Sun L."/>
            <person name="Xue Y."/>
            <person name="Zhao A."/>
            <person name="Gao Y."/>
            <person name="Zhu J."/>
            <person name="Kan B."/>
            <person name="Ding K."/>
            <person name="Chen S."/>
            <person name="Cheng H."/>
            <person name="Yao Z."/>
            <person name="He B."/>
            <person name="Chen R."/>
            <person name="Ma D."/>
            <person name="Qiang B."/>
            <person name="Wen Y."/>
            <person name="Hou Y."/>
            <person name="Yu J."/>
        </authorList>
    </citation>
    <scope>NUCLEOTIDE SEQUENCE [LARGE SCALE GENOMIC DNA]</scope>
    <source>
        <strain>301 / Serotype 2a</strain>
    </source>
</reference>
<reference key="2">
    <citation type="journal article" date="2003" name="Infect. Immun.">
        <title>Complete genome sequence and comparative genomics of Shigella flexneri serotype 2a strain 2457T.</title>
        <authorList>
            <person name="Wei J."/>
            <person name="Goldberg M.B."/>
            <person name="Burland V."/>
            <person name="Venkatesan M.M."/>
            <person name="Deng W."/>
            <person name="Fournier G."/>
            <person name="Mayhew G.F."/>
            <person name="Plunkett G. III"/>
            <person name="Rose D.J."/>
            <person name="Darling A."/>
            <person name="Mau B."/>
            <person name="Perna N.T."/>
            <person name="Payne S.M."/>
            <person name="Runyen-Janecky L.J."/>
            <person name="Zhou S."/>
            <person name="Schwartz D.C."/>
            <person name="Blattner F.R."/>
        </authorList>
    </citation>
    <scope>NUCLEOTIDE SEQUENCE [LARGE SCALE GENOMIC DNA]</scope>
    <source>
        <strain>ATCC 700930 / 2457T / Serotype 2a</strain>
    </source>
</reference>
<comment type="similarity">
    <text evidence="1">Belongs to the UPF0235 family.</text>
</comment>
<comment type="sequence caution" evidence="2">
    <conflict type="erroneous initiation">
        <sequence resource="EMBL-CDS" id="AAN44425"/>
    </conflict>
</comment>
<comment type="sequence caution" evidence="2">
    <conflict type="erroneous initiation">
        <sequence resource="EMBL-CDS" id="AAP18250"/>
    </conflict>
</comment>